<organism>
    <name type="scientific">Dictyostelium discoideum</name>
    <name type="common">Social amoeba</name>
    <dbReference type="NCBI Taxonomy" id="44689"/>
    <lineage>
        <taxon>Eukaryota</taxon>
        <taxon>Amoebozoa</taxon>
        <taxon>Evosea</taxon>
        <taxon>Eumycetozoa</taxon>
        <taxon>Dictyostelia</taxon>
        <taxon>Dictyosteliales</taxon>
        <taxon>Dictyosteliaceae</taxon>
        <taxon>Dictyostelium</taxon>
    </lineage>
</organism>
<reference key="1">
    <citation type="journal article" date="2005" name="Nature">
        <title>The genome of the social amoeba Dictyostelium discoideum.</title>
        <authorList>
            <person name="Eichinger L."/>
            <person name="Pachebat J.A."/>
            <person name="Gloeckner G."/>
            <person name="Rajandream M.A."/>
            <person name="Sucgang R."/>
            <person name="Berriman M."/>
            <person name="Song J."/>
            <person name="Olsen R."/>
            <person name="Szafranski K."/>
            <person name="Xu Q."/>
            <person name="Tunggal B."/>
            <person name="Kummerfeld S."/>
            <person name="Madera M."/>
            <person name="Konfortov B.A."/>
            <person name="Rivero F."/>
            <person name="Bankier A.T."/>
            <person name="Lehmann R."/>
            <person name="Hamlin N."/>
            <person name="Davies R."/>
            <person name="Gaudet P."/>
            <person name="Fey P."/>
            <person name="Pilcher K."/>
            <person name="Chen G."/>
            <person name="Saunders D."/>
            <person name="Sodergren E.J."/>
            <person name="Davis P."/>
            <person name="Kerhornou A."/>
            <person name="Nie X."/>
            <person name="Hall N."/>
            <person name="Anjard C."/>
            <person name="Hemphill L."/>
            <person name="Bason N."/>
            <person name="Farbrother P."/>
            <person name="Desany B."/>
            <person name="Just E."/>
            <person name="Morio T."/>
            <person name="Rost R."/>
            <person name="Churcher C.M."/>
            <person name="Cooper J."/>
            <person name="Haydock S."/>
            <person name="van Driessche N."/>
            <person name="Cronin A."/>
            <person name="Goodhead I."/>
            <person name="Muzny D.M."/>
            <person name="Mourier T."/>
            <person name="Pain A."/>
            <person name="Lu M."/>
            <person name="Harper D."/>
            <person name="Lindsay R."/>
            <person name="Hauser H."/>
            <person name="James K.D."/>
            <person name="Quiles M."/>
            <person name="Madan Babu M."/>
            <person name="Saito T."/>
            <person name="Buchrieser C."/>
            <person name="Wardroper A."/>
            <person name="Felder M."/>
            <person name="Thangavelu M."/>
            <person name="Johnson D."/>
            <person name="Knights A."/>
            <person name="Loulseged H."/>
            <person name="Mungall K.L."/>
            <person name="Oliver K."/>
            <person name="Price C."/>
            <person name="Quail M.A."/>
            <person name="Urushihara H."/>
            <person name="Hernandez J."/>
            <person name="Rabbinowitsch E."/>
            <person name="Steffen D."/>
            <person name="Sanders M."/>
            <person name="Ma J."/>
            <person name="Kohara Y."/>
            <person name="Sharp S."/>
            <person name="Simmonds M.N."/>
            <person name="Spiegler S."/>
            <person name="Tivey A."/>
            <person name="Sugano S."/>
            <person name="White B."/>
            <person name="Walker D."/>
            <person name="Woodward J.R."/>
            <person name="Winckler T."/>
            <person name="Tanaka Y."/>
            <person name="Shaulsky G."/>
            <person name="Schleicher M."/>
            <person name="Weinstock G.M."/>
            <person name="Rosenthal A."/>
            <person name="Cox E.C."/>
            <person name="Chisholm R.L."/>
            <person name="Gibbs R.A."/>
            <person name="Loomis W.F."/>
            <person name="Platzer M."/>
            <person name="Kay R.R."/>
            <person name="Williams J.G."/>
            <person name="Dear P.H."/>
            <person name="Noegel A.A."/>
            <person name="Barrell B.G."/>
            <person name="Kuspa A."/>
        </authorList>
    </citation>
    <scope>NUCLEOTIDE SEQUENCE [LARGE SCALE GENOMIC DNA]</scope>
    <source>
        <strain>AX4</strain>
    </source>
</reference>
<evidence type="ECO:0000250" key="1">
    <source>
        <dbReference type="UniProtKB" id="O24146"/>
    </source>
</evidence>
<evidence type="ECO:0000250" key="2">
    <source>
        <dbReference type="UniProtKB" id="Q42524"/>
    </source>
</evidence>
<evidence type="ECO:0000305" key="3"/>
<feature type="chain" id="PRO_0000327701" description="Probable 4-coumarate--CoA ligase 1">
    <location>
        <begin position="1"/>
        <end position="551"/>
    </location>
</feature>
<feature type="region of interest" description="SBD1" evidence="2">
    <location>
        <begin position="276"/>
        <end position="346"/>
    </location>
</feature>
<feature type="region of interest" description="SBD2" evidence="2">
    <location>
        <begin position="347"/>
        <end position="409"/>
    </location>
</feature>
<feature type="binding site" evidence="1">
    <location>
        <position position="205"/>
    </location>
    <ligand>
        <name>ATP</name>
        <dbReference type="ChEBI" id="CHEBI:30616"/>
    </ligand>
</feature>
<feature type="binding site" evidence="1">
    <location>
        <position position="206"/>
    </location>
    <ligand>
        <name>ATP</name>
        <dbReference type="ChEBI" id="CHEBI:30616"/>
    </ligand>
</feature>
<feature type="binding site" evidence="1">
    <location>
        <position position="207"/>
    </location>
    <ligand>
        <name>ATP</name>
        <dbReference type="ChEBI" id="CHEBI:30616"/>
    </ligand>
</feature>
<feature type="binding site" evidence="1">
    <location>
        <position position="208"/>
    </location>
    <ligand>
        <name>ATP</name>
        <dbReference type="ChEBI" id="CHEBI:30616"/>
    </ligand>
</feature>
<feature type="binding site" evidence="1">
    <location>
        <position position="209"/>
    </location>
    <ligand>
        <name>ATP</name>
        <dbReference type="ChEBI" id="CHEBI:30616"/>
    </ligand>
</feature>
<feature type="binding site" evidence="1">
    <location>
        <position position="213"/>
    </location>
    <ligand>
        <name>ATP</name>
        <dbReference type="ChEBI" id="CHEBI:30616"/>
    </ligand>
</feature>
<feature type="binding site" evidence="1">
    <location>
        <position position="253"/>
    </location>
    <ligand>
        <name>(E)-4-coumaroyl-AMP</name>
        <dbReference type="ChEBI" id="CHEBI:192348"/>
    </ligand>
</feature>
<feature type="binding site" evidence="1">
    <location>
        <position position="274"/>
    </location>
    <ligand>
        <name>CoA</name>
        <dbReference type="ChEBI" id="CHEBI:57287"/>
    </ligand>
</feature>
<feature type="binding site" evidence="1">
    <location>
        <position position="323"/>
    </location>
    <ligand>
        <name>(E)-4-coumaroyl-AMP</name>
        <dbReference type="ChEBI" id="CHEBI:192348"/>
    </ligand>
</feature>
<feature type="binding site" evidence="1">
    <location>
        <position position="346"/>
    </location>
    <ligand>
        <name>(E)-4-coumaroyl-AMP</name>
        <dbReference type="ChEBI" id="CHEBI:192348"/>
    </ligand>
</feature>
<feature type="binding site" evidence="1">
    <location>
        <position position="346"/>
    </location>
    <ligand>
        <name>ATP</name>
        <dbReference type="ChEBI" id="CHEBI:30616"/>
    </ligand>
</feature>
<feature type="binding site" evidence="1">
    <location>
        <position position="347"/>
    </location>
    <ligand>
        <name>(E)-4-coumaroyl-AMP</name>
        <dbReference type="ChEBI" id="CHEBI:192348"/>
    </ligand>
</feature>
<feature type="binding site" evidence="1">
    <location>
        <position position="347"/>
    </location>
    <ligand>
        <name>ATP</name>
        <dbReference type="ChEBI" id="CHEBI:30616"/>
    </ligand>
</feature>
<feature type="binding site" evidence="1">
    <location>
        <position position="351"/>
    </location>
    <ligand>
        <name>(E)-4-coumaroyl-AMP</name>
        <dbReference type="ChEBI" id="CHEBI:192348"/>
    </ligand>
</feature>
<feature type="binding site" evidence="1">
    <location>
        <position position="351"/>
    </location>
    <ligand>
        <name>ATP</name>
        <dbReference type="ChEBI" id="CHEBI:30616"/>
    </ligand>
</feature>
<feature type="binding site" evidence="1">
    <location>
        <position position="430"/>
    </location>
    <ligand>
        <name>ATP</name>
        <dbReference type="ChEBI" id="CHEBI:30616"/>
    </ligand>
</feature>
<feature type="binding site" evidence="1">
    <location>
        <position position="445"/>
    </location>
    <ligand>
        <name>ATP</name>
        <dbReference type="ChEBI" id="CHEBI:30616"/>
    </ligand>
</feature>
<feature type="binding site" evidence="1">
    <location>
        <position position="447"/>
    </location>
    <ligand>
        <name>(E)-4-coumaroyl-AMP</name>
        <dbReference type="ChEBI" id="CHEBI:192348"/>
    </ligand>
</feature>
<feature type="binding site" evidence="1">
    <location>
        <position position="451"/>
    </location>
    <ligand>
        <name>(E)-4-coumaroyl-AMP</name>
        <dbReference type="ChEBI" id="CHEBI:192348"/>
    </ligand>
</feature>
<feature type="binding site" evidence="1">
    <location>
        <position position="453"/>
    </location>
    <ligand>
        <name>CoA</name>
        <dbReference type="ChEBI" id="CHEBI:57287"/>
    </ligand>
</feature>
<feature type="binding site" evidence="1">
    <location>
        <position position="454"/>
    </location>
    <ligand>
        <name>CoA</name>
        <dbReference type="ChEBI" id="CHEBI:57287"/>
    </ligand>
</feature>
<feature type="binding site" evidence="1">
    <location>
        <position position="537"/>
    </location>
    <ligand>
        <name>ATP</name>
        <dbReference type="ChEBI" id="CHEBI:30616"/>
    </ligand>
</feature>
<name>4CL1_DICDI</name>
<proteinExistence type="inferred from homology"/>
<keyword id="KW-0067">ATP-binding</keyword>
<keyword id="KW-0436">Ligase</keyword>
<keyword id="KW-0460">Magnesium</keyword>
<keyword id="KW-0547">Nucleotide-binding</keyword>
<keyword id="KW-0587">Phenylpropanoid metabolism</keyword>
<keyword id="KW-1185">Reference proteome</keyword>
<accession>Q54P77</accession>
<gene>
    <name type="primary">4cl1</name>
    <name type="ORF">DDB_G0284831</name>
</gene>
<protein>
    <recommendedName>
        <fullName>Probable 4-coumarate--CoA ligase 1</fullName>
        <shortName>4CL 1</shortName>
        <ecNumber evidence="1">6.2.1.12</ecNumber>
    </recommendedName>
    <alternativeName>
        <fullName>4-coumaroyl-CoA synthase 1</fullName>
    </alternativeName>
</protein>
<dbReference type="EC" id="6.2.1.12" evidence="1"/>
<dbReference type="EMBL" id="AAFI02000071">
    <property type="protein sequence ID" value="EAL65068.1"/>
    <property type="molecule type" value="Genomic_DNA"/>
</dbReference>
<dbReference type="RefSeq" id="XP_638381.1">
    <property type="nucleotide sequence ID" value="XM_633289.1"/>
</dbReference>
<dbReference type="SMR" id="Q54P77"/>
<dbReference type="FunCoup" id="Q54P77">
    <property type="interactions" value="106"/>
</dbReference>
<dbReference type="STRING" id="44689.Q54P77"/>
<dbReference type="PaxDb" id="44689-DDB0231737"/>
<dbReference type="EnsemblProtists" id="EAL65068">
    <property type="protein sequence ID" value="EAL65068"/>
    <property type="gene ID" value="DDB_G0284831"/>
</dbReference>
<dbReference type="GeneID" id="8624750"/>
<dbReference type="KEGG" id="ddi:DDB_G0284831"/>
<dbReference type="dictyBase" id="DDB_G0284831">
    <property type="gene designation" value="4cl1"/>
</dbReference>
<dbReference type="VEuPathDB" id="AmoebaDB:DDB_G0284831"/>
<dbReference type="eggNOG" id="KOG1176">
    <property type="taxonomic scope" value="Eukaryota"/>
</dbReference>
<dbReference type="HOGENOM" id="CLU_000022_59_2_1"/>
<dbReference type="InParanoid" id="Q54P77"/>
<dbReference type="OMA" id="PNSSFWY"/>
<dbReference type="PhylomeDB" id="Q54P77"/>
<dbReference type="UniPathway" id="UPA00372">
    <property type="reaction ID" value="UER00547"/>
</dbReference>
<dbReference type="PRO" id="PR:Q54P77"/>
<dbReference type="Proteomes" id="UP000002195">
    <property type="component" value="Chromosome 4"/>
</dbReference>
<dbReference type="GO" id="GO:0016207">
    <property type="term" value="F:4-coumarate-CoA ligase activity"/>
    <property type="evidence" value="ECO:0007669"/>
    <property type="project" value="UniProtKB-EC"/>
</dbReference>
<dbReference type="GO" id="GO:0005524">
    <property type="term" value="F:ATP binding"/>
    <property type="evidence" value="ECO:0007669"/>
    <property type="project" value="UniProtKB-KW"/>
</dbReference>
<dbReference type="GO" id="GO:0016405">
    <property type="term" value="F:CoA-ligase activity"/>
    <property type="evidence" value="ECO:0000318"/>
    <property type="project" value="GO_Central"/>
</dbReference>
<dbReference type="GO" id="GO:0009698">
    <property type="term" value="P:phenylpropanoid metabolic process"/>
    <property type="evidence" value="ECO:0007669"/>
    <property type="project" value="UniProtKB-KW"/>
</dbReference>
<dbReference type="CDD" id="cd05911">
    <property type="entry name" value="Firefly_Luc_like"/>
    <property type="match status" value="1"/>
</dbReference>
<dbReference type="FunFam" id="3.30.300.30:FF:000007">
    <property type="entry name" value="4-coumarate--CoA ligase 2"/>
    <property type="match status" value="1"/>
</dbReference>
<dbReference type="FunFam" id="3.40.50.12780:FF:000003">
    <property type="entry name" value="Long-chain-fatty-acid--CoA ligase FadD"/>
    <property type="match status" value="1"/>
</dbReference>
<dbReference type="Gene3D" id="3.30.300.30">
    <property type="match status" value="1"/>
</dbReference>
<dbReference type="Gene3D" id="3.40.50.980">
    <property type="match status" value="2"/>
</dbReference>
<dbReference type="Gene3D" id="2.30.38.10">
    <property type="entry name" value="Luciferase, Domain 3"/>
    <property type="match status" value="1"/>
</dbReference>
<dbReference type="InterPro" id="IPR025110">
    <property type="entry name" value="AMP-bd_C"/>
</dbReference>
<dbReference type="InterPro" id="IPR045851">
    <property type="entry name" value="AMP-bd_C_sf"/>
</dbReference>
<dbReference type="InterPro" id="IPR000873">
    <property type="entry name" value="AMP-dep_synth/lig_dom"/>
</dbReference>
<dbReference type="PANTHER" id="PTHR24096:SF149">
    <property type="entry name" value="AMP-BINDING DOMAIN-CONTAINING PROTEIN-RELATED"/>
    <property type="match status" value="1"/>
</dbReference>
<dbReference type="PANTHER" id="PTHR24096">
    <property type="entry name" value="LONG-CHAIN-FATTY-ACID--COA LIGASE"/>
    <property type="match status" value="1"/>
</dbReference>
<dbReference type="Pfam" id="PF00501">
    <property type="entry name" value="AMP-binding"/>
    <property type="match status" value="1"/>
</dbReference>
<dbReference type="Pfam" id="PF13193">
    <property type="entry name" value="AMP-binding_C"/>
    <property type="match status" value="1"/>
</dbReference>
<dbReference type="SUPFAM" id="SSF56801">
    <property type="entry name" value="Acetyl-CoA synthetase-like"/>
    <property type="match status" value="1"/>
</dbReference>
<sequence length="551" mass="61000">MIIKVKGQTYFTSKYPNIIIPEKPVPQLILKHIRSKPDQVLLVDGLTFKEYSSHFVADTIEKVACGLNKLNIKKGDVLGVILPNLPEYVPIFHGTLLMGGITSLVNPDYTIEELSHTLATVSPRYLAVTLAVYEKIKNDLKRVFPSVEKVILVDIAGQTLKEIDQLTLSSDGIVMSFNQLINNNGKDYPIVRIDPKKDTAIIPFSSGTTGLFKGVCLSHHNIVSNTYQTQTIETSTYKKNDTVMGILPFFHIYGLMLFLMLMVKQGHRVVVLPKFEPVRFLELIQKYKVAISFIVPPVAIMFAKSPIVDKFDLSSLRTLFSGAAPLSSEVEDLIKERFKGRLVIKQGYGATELSPACFVIPSGLVKSGSAGILLPNQLAKIISPETGENLGMGEKGEICIKGPNVMLGYYNNEKATNEVIDKDGFLKTGDIGYVDEDGYYFIVDRSKELIKCKGFQVPPAELEALLLSHPKVADACVVGLSKGDMGEVPRGFVVIKQNESLTEKELLDWAHPKIANYKHFRGGIFFIPAIPKSATGKLLRKNLKDFNPPKL</sequence>
<comment type="function">
    <text evidence="1">Carboxylate--CoA ligase that may use 4-coumarate as substrate. Follows a two-step reaction mechanism, wherein the carboxylate substrate first undergoes adenylation by ATP, followed by a thioesterification in the presence of CoA to yield the final CoA thioester.</text>
</comment>
<comment type="catalytic activity">
    <reaction evidence="1">
        <text>(E)-4-coumarate + ATP + CoA = (E)-4-coumaroyl-CoA + AMP + diphosphate</text>
        <dbReference type="Rhea" id="RHEA:19641"/>
        <dbReference type="ChEBI" id="CHEBI:12876"/>
        <dbReference type="ChEBI" id="CHEBI:30616"/>
        <dbReference type="ChEBI" id="CHEBI:33019"/>
        <dbReference type="ChEBI" id="CHEBI:57287"/>
        <dbReference type="ChEBI" id="CHEBI:85008"/>
        <dbReference type="ChEBI" id="CHEBI:456215"/>
        <dbReference type="EC" id="6.2.1.12"/>
    </reaction>
    <physiologicalReaction direction="left-to-right" evidence="1">
        <dbReference type="Rhea" id="RHEA:19642"/>
    </physiologicalReaction>
</comment>
<comment type="catalytic activity">
    <reaction evidence="1">
        <text>(E)-4-coumarate + ATP + H(+) = (E)-4-coumaroyl-AMP + diphosphate</text>
        <dbReference type="Rhea" id="RHEA:72419"/>
        <dbReference type="ChEBI" id="CHEBI:12876"/>
        <dbReference type="ChEBI" id="CHEBI:15378"/>
        <dbReference type="ChEBI" id="CHEBI:30616"/>
        <dbReference type="ChEBI" id="CHEBI:33019"/>
        <dbReference type="ChEBI" id="CHEBI:192348"/>
    </reaction>
    <physiologicalReaction direction="left-to-right" evidence="1">
        <dbReference type="Rhea" id="RHEA:72420"/>
    </physiologicalReaction>
</comment>
<comment type="catalytic activity">
    <reaction evidence="1">
        <text>(E)-4-coumaroyl-AMP + CoA = (E)-4-coumaroyl-CoA + AMP + H(+)</text>
        <dbReference type="Rhea" id="RHEA:72423"/>
        <dbReference type="ChEBI" id="CHEBI:15378"/>
        <dbReference type="ChEBI" id="CHEBI:57287"/>
        <dbReference type="ChEBI" id="CHEBI:85008"/>
        <dbReference type="ChEBI" id="CHEBI:192348"/>
        <dbReference type="ChEBI" id="CHEBI:456215"/>
    </reaction>
    <physiologicalReaction direction="left-to-right" evidence="1">
        <dbReference type="Rhea" id="RHEA:72424"/>
    </physiologicalReaction>
</comment>
<comment type="cofactor">
    <cofactor evidence="1">
        <name>Mg(2+)</name>
        <dbReference type="ChEBI" id="CHEBI:18420"/>
    </cofactor>
</comment>
<comment type="pathway">
    <text evidence="2">Phytoalexin biosynthesis; 3,4',5-trihydroxystilbene biosynthesis; 3,4',5-trihydroxystilbene from trans-4-coumarate: step 1/2.</text>
</comment>
<comment type="domain">
    <text evidence="2">Both substrate-binding domains (SBD1 and SBD2) are involved in the substrate recognition, and are sufficient to confer the substrate specificity.</text>
</comment>
<comment type="similarity">
    <text evidence="3">Belongs to the ATP-dependent AMP-binding enzyme family.</text>
</comment>